<accession>Q7A6R4</accession>
<evidence type="ECO:0000250" key="1"/>
<evidence type="ECO:0000255" key="2">
    <source>
        <dbReference type="HAMAP-Rule" id="MF_00094"/>
    </source>
</evidence>
<feature type="chain" id="PRO_0000166847" description="Peptide chain release factor 2">
    <location>
        <begin position="1"/>
        <end position="369"/>
    </location>
</feature>
<feature type="modified residue" description="N5-methylglutamine" evidence="2">
    <location>
        <position position="252"/>
    </location>
</feature>
<organism>
    <name type="scientific">Staphylococcus aureus (strain N315)</name>
    <dbReference type="NCBI Taxonomy" id="158879"/>
    <lineage>
        <taxon>Bacteria</taxon>
        <taxon>Bacillati</taxon>
        <taxon>Bacillota</taxon>
        <taxon>Bacilli</taxon>
        <taxon>Bacillales</taxon>
        <taxon>Staphylococcaceae</taxon>
        <taxon>Staphylococcus</taxon>
    </lineage>
</organism>
<reference key="1">
    <citation type="journal article" date="2001" name="Lancet">
        <title>Whole genome sequencing of meticillin-resistant Staphylococcus aureus.</title>
        <authorList>
            <person name="Kuroda M."/>
            <person name="Ohta T."/>
            <person name="Uchiyama I."/>
            <person name="Baba T."/>
            <person name="Yuzawa H."/>
            <person name="Kobayashi I."/>
            <person name="Cui L."/>
            <person name="Oguchi A."/>
            <person name="Aoki K."/>
            <person name="Nagai Y."/>
            <person name="Lian J.-Q."/>
            <person name="Ito T."/>
            <person name="Kanamori M."/>
            <person name="Matsumaru H."/>
            <person name="Maruyama A."/>
            <person name="Murakami H."/>
            <person name="Hosoyama A."/>
            <person name="Mizutani-Ui Y."/>
            <person name="Takahashi N.K."/>
            <person name="Sawano T."/>
            <person name="Inoue R."/>
            <person name="Kaito C."/>
            <person name="Sekimizu K."/>
            <person name="Hirakawa H."/>
            <person name="Kuhara S."/>
            <person name="Goto S."/>
            <person name="Yabuzaki J."/>
            <person name="Kanehisa M."/>
            <person name="Yamashita A."/>
            <person name="Oshima K."/>
            <person name="Furuya K."/>
            <person name="Yoshino C."/>
            <person name="Shiba T."/>
            <person name="Hattori M."/>
            <person name="Ogasawara N."/>
            <person name="Hayashi H."/>
            <person name="Hiramatsu K."/>
        </authorList>
    </citation>
    <scope>NUCLEOTIDE SEQUENCE [LARGE SCALE GENOMIC DNA]</scope>
    <source>
        <strain>N315</strain>
    </source>
</reference>
<reference key="2">
    <citation type="submission" date="2007-10" db="UniProtKB">
        <title>Shotgun proteomic analysis of total and membrane protein extracts of S. aureus strain N315.</title>
        <authorList>
            <person name="Vaezzadeh A.R."/>
            <person name="Deshusses J."/>
            <person name="Lescuyer P."/>
            <person name="Hochstrasser D.F."/>
        </authorList>
    </citation>
    <scope>IDENTIFICATION BY MASS SPECTROMETRY [LARGE SCALE ANALYSIS]</scope>
    <source>
        <strain>N315</strain>
    </source>
</reference>
<name>RF2_STAAN</name>
<comment type="function">
    <text evidence="2">Peptide chain release factor 2 directs the termination of translation in response to the peptide chain termination codons UGA and UAA.</text>
</comment>
<comment type="subcellular location">
    <subcellularLocation>
        <location evidence="2">Cytoplasm</location>
    </subcellularLocation>
</comment>
<comment type="PTM">
    <text evidence="2">Methylated by PrmC. Methylation increases the termination efficiency of RF2.</text>
</comment>
<comment type="miscellaneous">
    <text evidence="1">The gene for this protein contains a UGA in-frame termination codon after Leu-24; a naturally occurring frameshift enables complete translation of RF-2. This provides a mechanism for the protein to regulate its own production (By similarity).</text>
</comment>
<comment type="similarity">
    <text evidence="2">Belongs to the prokaryotic/mitochondrial release factor family.</text>
</comment>
<sequence>MELSEIKRNIDKYNQDLTQIRGSLDLENKETNIQEYEEMMAEPNFWDNQTKAQDIIDKNNALKAIVNGYKTLQAEVDDMDATWDLLQEEFDEEMKEDLEQEVINFKAKVDEYELQLLLDGPHDANNAILELHPGAGGTESQDWANMLFRMYQRYCEKKGFKVETVDYLPGDEAGIKSVTLLIKGHNAYGYLKAEKGVHRLVRISPFDSSGRRHTSFASCDVIPDFNNDEIEIEINPDDITVDTFRASGAGGQHINKTESAIRITHHPSGIVVNNQNERSQIKNREAAMKMLKSKLYQLKLEEQAREMAEIRGEQKEIGWGSQIRSYVFHPYSMVKDHRTNEETGKVDAVMDGDIGPFIESYLRQTMSHD</sequence>
<keyword id="KW-0963">Cytoplasm</keyword>
<keyword id="KW-0488">Methylation</keyword>
<keyword id="KW-0648">Protein biosynthesis</keyword>
<keyword id="KW-0688">Ribosomal frameshifting</keyword>
<gene>
    <name evidence="2" type="primary">prfB</name>
    <name type="ordered locus">SA0709</name>
</gene>
<protein>
    <recommendedName>
        <fullName evidence="2">Peptide chain release factor 2</fullName>
        <shortName evidence="2">RF-2</shortName>
    </recommendedName>
</protein>
<dbReference type="EMBL" id="BA000018">
    <property type="protein sequence ID" value="BAB41942.1"/>
    <property type="status" value="ALT_SEQ"/>
    <property type="molecule type" value="Genomic_DNA"/>
</dbReference>
<dbReference type="PIR" id="C89848">
    <property type="entry name" value="C89848"/>
</dbReference>
<dbReference type="SMR" id="Q7A6R4"/>
<dbReference type="EnsemblBacteria" id="BAB41942">
    <property type="protein sequence ID" value="BAB41942"/>
    <property type="gene ID" value="BAB41942"/>
</dbReference>
<dbReference type="KEGG" id="sau:SA0709"/>
<dbReference type="HOGENOM" id="CLU_036856_6_0_9"/>
<dbReference type="GO" id="GO:0005737">
    <property type="term" value="C:cytoplasm"/>
    <property type="evidence" value="ECO:0007669"/>
    <property type="project" value="UniProtKB-SubCell"/>
</dbReference>
<dbReference type="GO" id="GO:0016149">
    <property type="term" value="F:translation release factor activity, codon specific"/>
    <property type="evidence" value="ECO:0007669"/>
    <property type="project" value="UniProtKB-UniRule"/>
</dbReference>
<dbReference type="GO" id="GO:0075523">
    <property type="term" value="P:viral translational frameshifting"/>
    <property type="evidence" value="ECO:0007669"/>
    <property type="project" value="UniProtKB-KW"/>
</dbReference>
<dbReference type="FunFam" id="3.30.160.20:FF:000010">
    <property type="entry name" value="Peptide chain release factor 2"/>
    <property type="match status" value="1"/>
</dbReference>
<dbReference type="Gene3D" id="3.30.160.20">
    <property type="match status" value="1"/>
</dbReference>
<dbReference type="Gene3D" id="3.30.70.1660">
    <property type="match status" value="1"/>
</dbReference>
<dbReference type="Gene3D" id="1.20.58.410">
    <property type="entry name" value="Release factor"/>
    <property type="match status" value="1"/>
</dbReference>
<dbReference type="HAMAP" id="MF_00094">
    <property type="entry name" value="Rel_fac_2"/>
    <property type="match status" value="1"/>
</dbReference>
<dbReference type="InterPro" id="IPR005139">
    <property type="entry name" value="PCRF"/>
</dbReference>
<dbReference type="InterPro" id="IPR000352">
    <property type="entry name" value="Pep_chain_release_fac_I"/>
</dbReference>
<dbReference type="InterPro" id="IPR045853">
    <property type="entry name" value="Pep_chain_release_fac_I_sf"/>
</dbReference>
<dbReference type="InterPro" id="IPR004374">
    <property type="entry name" value="PrfB"/>
</dbReference>
<dbReference type="NCBIfam" id="TIGR00020">
    <property type="entry name" value="prfB"/>
    <property type="match status" value="1"/>
</dbReference>
<dbReference type="PANTHER" id="PTHR43116:SF3">
    <property type="entry name" value="CLASS I PEPTIDE CHAIN RELEASE FACTOR"/>
    <property type="match status" value="1"/>
</dbReference>
<dbReference type="PANTHER" id="PTHR43116">
    <property type="entry name" value="PEPTIDE CHAIN RELEASE FACTOR 2"/>
    <property type="match status" value="1"/>
</dbReference>
<dbReference type="Pfam" id="PF03462">
    <property type="entry name" value="PCRF"/>
    <property type="match status" value="1"/>
</dbReference>
<dbReference type="Pfam" id="PF00472">
    <property type="entry name" value="RF-1"/>
    <property type="match status" value="1"/>
</dbReference>
<dbReference type="SMART" id="SM00937">
    <property type="entry name" value="PCRF"/>
    <property type="match status" value="1"/>
</dbReference>
<dbReference type="SUPFAM" id="SSF75620">
    <property type="entry name" value="Release factor"/>
    <property type="match status" value="1"/>
</dbReference>
<dbReference type="PROSITE" id="PS00745">
    <property type="entry name" value="RF_PROK_I"/>
    <property type="match status" value="1"/>
</dbReference>
<proteinExistence type="evidence at protein level"/>